<accession>Q5HJ90</accession>
<keyword id="KW-1003">Cell membrane</keyword>
<keyword id="KW-0472">Membrane</keyword>
<keyword id="KW-0812">Transmembrane</keyword>
<keyword id="KW-1133">Transmembrane helix</keyword>
<keyword id="KW-0843">Virulence</keyword>
<protein>
    <recommendedName>
        <fullName evidence="2">Type VII secretion system accessory factor EsaA</fullName>
    </recommendedName>
</protein>
<sequence>MKKKNWIYALIVTLIIIIAIVSMIFFVQTKYGDQSEKGSQSVSNKNNKIHIAIVNEDQPTTYNGKKVELGQAFIKRLANEKNYKFETVTRNVAESGLKNGGYQVMIVIPENFSKLAMQLDAKTPSKISLQYKTAVGQKEEVAKNTEKVVSNVLNDFNKNLVEIYLTSIIDNLHNAQKNVGAIMTREHGVNSKFSNYLLNPINDFPELFTDTLVNSISANKDITKWFQTYNKSLLSANSDTFRVNTDYNVSTLIEKQNSLFDEHNTAMDKMLQDYKSQKDSVELDNYINALKQMDSQIDQQSSMQDTGKEEYKQTVKENLDKLREIIQSQESPFSKGMIEDYRKQLTESLQDELANNKDLQDALNSIKMNNAQFAENLEKQLHDDIVKEPDTDTTFIYNMSKQDFIAAGLNEGEANKYEAIVKEAKRYKNEYNLKKPLAEHINLTDYDNQVAQDTSSLINDGVKVQRTETIKSNDINQLTVATDPHFNFEGDIKINGKKYDIKDQSVQLDTSNKEYKVEVNGVAKLKKDAEKDFLKDKTMHLQLLFGQANRQDEPNDKKATSVVDVTLNHNLDGRLSKDALSQQLSALSRFDAHYKMYTDTKGREDKPFDNKRLIDMMVDQVINDMESFKDDKVAVLHQIDSMEENSDKLIDDILNNKKNTTKNKEDISKLIDQLENVKKTFAEEPQEPKIDKGKNDEFNTMSSNLDKEISRISEKSTQLLSDTQESKSIADSVSGQLNQVDNNVNKLHATGRALGVRANDLNRQMAKNDKDNELFAKEFKKVLQNSKDGDRQNQALKAFMSNPVQKKNLENVLANNGNTDVISPTLFVLLMYLLSMITAYIFYSYERAKGQMNFIKDDYSSKNHLWNNVITSGVIGTTGLVEGLIVGLIAMNKFHVLAGYRAKFILMVILTMMVFVLINTYLLRQVKSIGMFLMIAALGLYFVAMNNLKAAGQGVTNKISPLSYIDNMFFNYLNAEHPIGLVLVILTVLVIIGFVLNMFIKHFKKERLI</sequence>
<dbReference type="EMBL" id="CP000046">
    <property type="protein sequence ID" value="AAW38826.1"/>
    <property type="molecule type" value="Genomic_DNA"/>
</dbReference>
<dbReference type="RefSeq" id="WP_000728955.1">
    <property type="nucleotide sequence ID" value="NZ_JBGOFO010000001.1"/>
</dbReference>
<dbReference type="SMR" id="Q5HJ90"/>
<dbReference type="KEGG" id="sac:SACOL0272"/>
<dbReference type="HOGENOM" id="CLU_015018_0_0_9"/>
<dbReference type="Proteomes" id="UP000000530">
    <property type="component" value="Chromosome"/>
</dbReference>
<dbReference type="GO" id="GO:0005886">
    <property type="term" value="C:plasma membrane"/>
    <property type="evidence" value="ECO:0007669"/>
    <property type="project" value="UniProtKB-SubCell"/>
</dbReference>
<dbReference type="Gene3D" id="3.40.1710.10">
    <property type="entry name" value="abc type-2 transporter like domain"/>
    <property type="match status" value="1"/>
</dbReference>
<dbReference type="InterPro" id="IPR051328">
    <property type="entry name" value="T7SS_ABC-Transporter"/>
</dbReference>
<dbReference type="InterPro" id="IPR023838">
    <property type="entry name" value="T7SS_EsaA"/>
</dbReference>
<dbReference type="NCBIfam" id="TIGR03929">
    <property type="entry name" value="T7_esaA_Nterm"/>
    <property type="match status" value="1"/>
</dbReference>
<dbReference type="PANTHER" id="PTHR43077:SF10">
    <property type="entry name" value="TRANSPORT PERMEASE PROTEIN"/>
    <property type="match status" value="1"/>
</dbReference>
<dbReference type="PANTHER" id="PTHR43077">
    <property type="entry name" value="TRANSPORT PERMEASE YVFS-RELATED"/>
    <property type="match status" value="1"/>
</dbReference>
<gene>
    <name evidence="2" type="primary">esaA</name>
    <name type="ordered locus">SACOL0272</name>
</gene>
<organism>
    <name type="scientific">Staphylococcus aureus (strain COL)</name>
    <dbReference type="NCBI Taxonomy" id="93062"/>
    <lineage>
        <taxon>Bacteria</taxon>
        <taxon>Bacillati</taxon>
        <taxon>Bacillota</taxon>
        <taxon>Bacilli</taxon>
        <taxon>Bacillales</taxon>
        <taxon>Staphylococcaceae</taxon>
        <taxon>Staphylococcus</taxon>
    </lineage>
</organism>
<name>ESAA_STAAC</name>
<comment type="function">
    <text evidence="1">Component of the type VII secretion system (Ess). Provides together with EssB and other components such as EssC and EssE a secretion platform across the cytoplasmic membrane in the host.</text>
</comment>
<comment type="subunit">
    <text evidence="1 3">Homodimer (By similarity). Interacts with EssB (By similarity).</text>
</comment>
<comment type="subcellular location">
    <subcellularLocation>
        <location evidence="3">Cell membrane</location>
        <topology evidence="4">Multi-pass membrane protein</topology>
    </subcellularLocation>
</comment>
<comment type="similarity">
    <text evidence="6">Belongs to the EsaA family.</text>
</comment>
<evidence type="ECO:0000250" key="1">
    <source>
        <dbReference type="UniProtKB" id="A0A0H2XFP1"/>
    </source>
</evidence>
<evidence type="ECO:0000250" key="2">
    <source>
        <dbReference type="UniProtKB" id="P0C049"/>
    </source>
</evidence>
<evidence type="ECO:0000250" key="3">
    <source>
        <dbReference type="UniProtKB" id="Q2G188"/>
    </source>
</evidence>
<evidence type="ECO:0000255" key="4"/>
<evidence type="ECO:0000256" key="5">
    <source>
        <dbReference type="SAM" id="MobiDB-lite"/>
    </source>
</evidence>
<evidence type="ECO:0000305" key="6"/>
<feature type="chain" id="PRO_0000087036" description="Type VII secretion system accessory factor EsaA">
    <location>
        <begin position="1"/>
        <end position="1009"/>
    </location>
</feature>
<feature type="transmembrane region" description="Helical" evidence="4">
    <location>
        <begin position="7"/>
        <end position="27"/>
    </location>
</feature>
<feature type="transmembrane region" description="Helical" evidence="4">
    <location>
        <begin position="822"/>
        <end position="842"/>
    </location>
</feature>
<feature type="transmembrane region" description="Helical" evidence="4">
    <location>
        <begin position="869"/>
        <end position="889"/>
    </location>
</feature>
<feature type="transmembrane region" description="Helical" evidence="4">
    <location>
        <begin position="903"/>
        <end position="923"/>
    </location>
</feature>
<feature type="transmembrane region" description="Helical" evidence="4">
    <location>
        <begin position="928"/>
        <end position="948"/>
    </location>
</feature>
<feature type="transmembrane region" description="Helical" evidence="4">
    <location>
        <begin position="979"/>
        <end position="999"/>
    </location>
</feature>
<feature type="region of interest" description="Disordered" evidence="5">
    <location>
        <begin position="680"/>
        <end position="707"/>
    </location>
</feature>
<feature type="compositionally biased region" description="Basic and acidic residues" evidence="5">
    <location>
        <begin position="680"/>
        <end position="697"/>
    </location>
</feature>
<reference key="1">
    <citation type="journal article" date="2005" name="J. Bacteriol.">
        <title>Insights on evolution of virulence and resistance from the complete genome analysis of an early methicillin-resistant Staphylococcus aureus strain and a biofilm-producing methicillin-resistant Staphylococcus epidermidis strain.</title>
        <authorList>
            <person name="Gill S.R."/>
            <person name="Fouts D.E."/>
            <person name="Archer G.L."/>
            <person name="Mongodin E.F."/>
            <person name="DeBoy R.T."/>
            <person name="Ravel J."/>
            <person name="Paulsen I.T."/>
            <person name="Kolonay J.F."/>
            <person name="Brinkac L.M."/>
            <person name="Beanan M.J."/>
            <person name="Dodson R.J."/>
            <person name="Daugherty S.C."/>
            <person name="Madupu R."/>
            <person name="Angiuoli S.V."/>
            <person name="Durkin A.S."/>
            <person name="Haft D.H."/>
            <person name="Vamathevan J.J."/>
            <person name="Khouri H."/>
            <person name="Utterback T.R."/>
            <person name="Lee C."/>
            <person name="Dimitrov G."/>
            <person name="Jiang L."/>
            <person name="Qin H."/>
            <person name="Weidman J."/>
            <person name="Tran K."/>
            <person name="Kang K.H."/>
            <person name="Hance I.R."/>
            <person name="Nelson K.E."/>
            <person name="Fraser C.M."/>
        </authorList>
    </citation>
    <scope>NUCLEOTIDE SEQUENCE [LARGE SCALE GENOMIC DNA]</scope>
    <source>
        <strain>COL</strain>
    </source>
</reference>
<proteinExistence type="inferred from homology"/>